<name>RL13_SULTO</name>
<proteinExistence type="inferred from homology"/>
<accession>Q96YW2</accession>
<gene>
    <name evidence="1" type="primary">rpl13</name>
    <name type="ordered locus">STK_20650</name>
</gene>
<reference key="1">
    <citation type="journal article" date="2001" name="DNA Res.">
        <title>Complete genome sequence of an aerobic thermoacidophilic Crenarchaeon, Sulfolobus tokodaii strain7.</title>
        <authorList>
            <person name="Kawarabayasi Y."/>
            <person name="Hino Y."/>
            <person name="Horikawa H."/>
            <person name="Jin-no K."/>
            <person name="Takahashi M."/>
            <person name="Sekine M."/>
            <person name="Baba S."/>
            <person name="Ankai A."/>
            <person name="Kosugi H."/>
            <person name="Hosoyama A."/>
            <person name="Fukui S."/>
            <person name="Nagai Y."/>
            <person name="Nishijima K."/>
            <person name="Otsuka R."/>
            <person name="Nakazawa H."/>
            <person name="Takamiya M."/>
            <person name="Kato Y."/>
            <person name="Yoshizawa T."/>
            <person name="Tanaka T."/>
            <person name="Kudoh Y."/>
            <person name="Yamazaki J."/>
            <person name="Kushida N."/>
            <person name="Oguchi A."/>
            <person name="Aoki K."/>
            <person name="Masuda S."/>
            <person name="Yanagii M."/>
            <person name="Nishimura M."/>
            <person name="Yamagishi A."/>
            <person name="Oshima T."/>
            <person name="Kikuchi H."/>
        </authorList>
    </citation>
    <scope>NUCLEOTIDE SEQUENCE [LARGE SCALE GENOMIC DNA]</scope>
    <source>
        <strain>DSM 16993 / JCM 10545 / NBRC 100140 / 7</strain>
    </source>
</reference>
<protein>
    <recommendedName>
        <fullName evidence="1">Large ribosomal subunit protein uL13</fullName>
    </recommendedName>
    <alternativeName>
        <fullName evidence="2">50S ribosomal protein L13</fullName>
    </alternativeName>
</protein>
<evidence type="ECO:0000255" key="1">
    <source>
        <dbReference type="HAMAP-Rule" id="MF_01366"/>
    </source>
</evidence>
<evidence type="ECO:0000305" key="2"/>
<keyword id="KW-1185">Reference proteome</keyword>
<keyword id="KW-0687">Ribonucleoprotein</keyword>
<keyword id="KW-0689">Ribosomal protein</keyword>
<sequence>MSEQLVVVNAENQILGRMATHIAKLLIQGKRVVVVNAEKAIISGPRARVVRGYSLIFSVRKFQNPEKNTIKRPRTPINIVKRTVRGMLPKNKSGKMMFKNLIVFIGIPAEYKDKQMIRFEDADVKRLKGKYITVGELSKLLGGFSQ</sequence>
<organism>
    <name type="scientific">Sulfurisphaera tokodaii (strain DSM 16993 / JCM 10545 / NBRC 100140 / 7)</name>
    <name type="common">Sulfolobus tokodaii</name>
    <dbReference type="NCBI Taxonomy" id="273063"/>
    <lineage>
        <taxon>Archaea</taxon>
        <taxon>Thermoproteota</taxon>
        <taxon>Thermoprotei</taxon>
        <taxon>Sulfolobales</taxon>
        <taxon>Sulfolobaceae</taxon>
        <taxon>Sulfurisphaera</taxon>
    </lineage>
</organism>
<dbReference type="EMBL" id="BA000023">
    <property type="protein sequence ID" value="BAB67164.1"/>
    <property type="molecule type" value="Genomic_DNA"/>
</dbReference>
<dbReference type="RefSeq" id="WP_010980140.1">
    <property type="nucleotide sequence ID" value="NC_003106.2"/>
</dbReference>
<dbReference type="SMR" id="Q96YW2"/>
<dbReference type="STRING" id="273063.STK_20650"/>
<dbReference type="GeneID" id="1460130"/>
<dbReference type="KEGG" id="sto:STK_20650"/>
<dbReference type="PATRIC" id="fig|273063.9.peg.2353"/>
<dbReference type="eggNOG" id="arCOG04242">
    <property type="taxonomic scope" value="Archaea"/>
</dbReference>
<dbReference type="OrthoDB" id="7668at2157"/>
<dbReference type="Proteomes" id="UP000001015">
    <property type="component" value="Chromosome"/>
</dbReference>
<dbReference type="GO" id="GO:0022625">
    <property type="term" value="C:cytosolic large ribosomal subunit"/>
    <property type="evidence" value="ECO:0007669"/>
    <property type="project" value="TreeGrafter"/>
</dbReference>
<dbReference type="GO" id="GO:0003729">
    <property type="term" value="F:mRNA binding"/>
    <property type="evidence" value="ECO:0007669"/>
    <property type="project" value="TreeGrafter"/>
</dbReference>
<dbReference type="GO" id="GO:0003735">
    <property type="term" value="F:structural constituent of ribosome"/>
    <property type="evidence" value="ECO:0007669"/>
    <property type="project" value="InterPro"/>
</dbReference>
<dbReference type="GO" id="GO:0017148">
    <property type="term" value="P:negative regulation of translation"/>
    <property type="evidence" value="ECO:0007669"/>
    <property type="project" value="TreeGrafter"/>
</dbReference>
<dbReference type="GO" id="GO:0006412">
    <property type="term" value="P:translation"/>
    <property type="evidence" value="ECO:0007669"/>
    <property type="project" value="UniProtKB-UniRule"/>
</dbReference>
<dbReference type="CDD" id="cd00392">
    <property type="entry name" value="Ribosomal_L13"/>
    <property type="match status" value="1"/>
</dbReference>
<dbReference type="Gene3D" id="3.90.1180.10">
    <property type="entry name" value="Ribosomal protein L13"/>
    <property type="match status" value="1"/>
</dbReference>
<dbReference type="HAMAP" id="MF_01366">
    <property type="entry name" value="Ribosomal_uL13"/>
    <property type="match status" value="1"/>
</dbReference>
<dbReference type="InterPro" id="IPR005822">
    <property type="entry name" value="Ribosomal_uL13"/>
</dbReference>
<dbReference type="InterPro" id="IPR005823">
    <property type="entry name" value="Ribosomal_uL13_bac-type"/>
</dbReference>
<dbReference type="InterPro" id="IPR023563">
    <property type="entry name" value="Ribosomal_uL13_CS"/>
</dbReference>
<dbReference type="InterPro" id="IPR005755">
    <property type="entry name" value="Ribosomal_uL13_euk/arc"/>
</dbReference>
<dbReference type="InterPro" id="IPR036899">
    <property type="entry name" value="Ribosomal_uL13_sf"/>
</dbReference>
<dbReference type="NCBIfam" id="TIGR01077">
    <property type="entry name" value="L13_A_E"/>
    <property type="match status" value="1"/>
</dbReference>
<dbReference type="NCBIfam" id="NF005004">
    <property type="entry name" value="PRK06394.1"/>
    <property type="match status" value="1"/>
</dbReference>
<dbReference type="PANTHER" id="PTHR11545:SF3">
    <property type="entry name" value="LARGE RIBOSOMAL SUBUNIT PROTEIN UL13"/>
    <property type="match status" value="1"/>
</dbReference>
<dbReference type="PANTHER" id="PTHR11545">
    <property type="entry name" value="RIBOSOMAL PROTEIN L13"/>
    <property type="match status" value="1"/>
</dbReference>
<dbReference type="Pfam" id="PF00572">
    <property type="entry name" value="Ribosomal_L13"/>
    <property type="match status" value="1"/>
</dbReference>
<dbReference type="PIRSF" id="PIRSF002181">
    <property type="entry name" value="Ribosomal_L13"/>
    <property type="match status" value="1"/>
</dbReference>
<dbReference type="SUPFAM" id="SSF52161">
    <property type="entry name" value="Ribosomal protein L13"/>
    <property type="match status" value="1"/>
</dbReference>
<dbReference type="PROSITE" id="PS00783">
    <property type="entry name" value="RIBOSOMAL_L13"/>
    <property type="match status" value="1"/>
</dbReference>
<comment type="function">
    <text evidence="1">This protein is one of the early assembly proteins of the 50S ribosomal subunit, although it is not seen to bind rRNA by itself. It is important during the early stages of 50S assembly.</text>
</comment>
<comment type="subunit">
    <text evidence="1">Part of the 50S ribosomal subunit.</text>
</comment>
<comment type="similarity">
    <text evidence="1">Belongs to the universal ribosomal protein uL13 family.</text>
</comment>
<feature type="chain" id="PRO_0000261851" description="Large ribosomal subunit protein uL13">
    <location>
        <begin position="1"/>
        <end position="146"/>
    </location>
</feature>